<proteinExistence type="predicted"/>
<comment type="similarity">
    <text evidence="1">To phage SP01 gene 46 protein.</text>
</comment>
<dbReference type="EMBL" id="X56064">
    <property type="protein sequence ID" value="CAA39539.1"/>
    <property type="molecule type" value="Genomic_DNA"/>
</dbReference>
<dbReference type="EMBL" id="X97918">
    <property type="protein sequence ID" value="CAA66577.1"/>
    <property type="molecule type" value="Genomic_DNA"/>
</dbReference>
<dbReference type="PIR" id="S24453">
    <property type="entry name" value="S24453"/>
</dbReference>
<dbReference type="RefSeq" id="NP_690659.1">
    <property type="nucleotide sequence ID" value="NC_004166.2"/>
</dbReference>
<dbReference type="SMR" id="Q38440"/>
<dbReference type="GeneID" id="955275"/>
<dbReference type="KEGG" id="vg:955275"/>
<dbReference type="OrthoDB" id="39325at10239"/>
<dbReference type="Proteomes" id="UP000002559">
    <property type="component" value="Genome"/>
</dbReference>
<organism>
    <name type="scientific">Bacillus phage SPP1</name>
    <name type="common">Bacteriophage SPP1</name>
    <dbReference type="NCBI Taxonomy" id="10724"/>
    <lineage>
        <taxon>Viruses</taxon>
        <taxon>Duplodnaviria</taxon>
        <taxon>Heunggongvirae</taxon>
        <taxon>Uroviricota</taxon>
        <taxon>Caudoviricetes</taxon>
    </lineage>
</organism>
<evidence type="ECO:0000305" key="1"/>
<sequence>MRPNDWRKKNRIQQIEYKKNNLTKDDIELLEEIVKRAKRGEFVDFMFAASLNTPDDMVFVGYTDYMSIRNMSSSRQNHYYACMTP</sequence>
<protein>
    <recommendedName>
        <fullName>Uncharacterized 10.2 kDa protein in GP2-GP6 intergenic region</fullName>
    </recommendedName>
    <alternativeName>
        <fullName>ORF 4</fullName>
    </alternativeName>
</protein>
<organismHost>
    <name type="scientific">Bacillus subtilis</name>
    <dbReference type="NCBI Taxonomy" id="1423"/>
</organismHost>
<reference key="1">
    <citation type="journal article" date="1992" name="J. Mol. Biol.">
        <title>Molecular analysis of the Bacillus subtilis bacteriophage SPP1 region encompassing genes 1 to 6. The products of gene 1 and gene 2 are required for pac cleavage.</title>
        <authorList>
            <person name="Chai S."/>
            <person name="Bravo A."/>
            <person name="Lueder G."/>
            <person name="Nedlin A."/>
            <person name="Trautner T.A."/>
            <person name="Alonso J.C."/>
        </authorList>
    </citation>
    <scope>NUCLEOTIDE SEQUENCE [GENOMIC DNA]</scope>
</reference>
<reference key="2">
    <citation type="journal article" date="1997" name="Gene">
        <title>The complete nucleotide sequence and functional organization of Bacillus subtilis bacteriophage SPP1.</title>
        <authorList>
            <person name="Alonso J.C."/>
            <person name="Luder G."/>
            <person name="Stiege A.C."/>
            <person name="Chai S."/>
            <person name="Weise F."/>
            <person name="Trautner T.A."/>
        </authorList>
    </citation>
    <scope>NUCLEOTIDE SEQUENCE [LARGE SCALE GENOMIC DNA]</scope>
</reference>
<feature type="chain" id="PRO_0000077795" description="Uncharacterized 10.2 kDa protein in GP2-GP6 intergenic region">
    <location>
        <begin position="1"/>
        <end position="85"/>
    </location>
</feature>
<name>YOR4_BPSPP</name>
<accession>Q38440</accession>
<keyword id="KW-1185">Reference proteome</keyword>